<evidence type="ECO:0000250" key="1"/>
<evidence type="ECO:0000255" key="2">
    <source>
        <dbReference type="PROSITE-ProRule" id="PRU00541"/>
    </source>
</evidence>
<evidence type="ECO:0000255" key="3">
    <source>
        <dbReference type="PROSITE-ProRule" id="PRU00542"/>
    </source>
</evidence>
<evidence type="ECO:0000256" key="4">
    <source>
        <dbReference type="SAM" id="MobiDB-lite"/>
    </source>
</evidence>
<evidence type="ECO:0000305" key="5"/>
<gene>
    <name type="primary">DBP9</name>
    <name type="ordered locus">CAALFM_C601890CA</name>
    <name type="ORF">Ca20C1.02</name>
    <name type="ORF">CaO19.10896</name>
    <name type="ORF">CaO19.3393</name>
</gene>
<keyword id="KW-0067">ATP-binding</keyword>
<keyword id="KW-0347">Helicase</keyword>
<keyword id="KW-0378">Hydrolase</keyword>
<keyword id="KW-0547">Nucleotide-binding</keyword>
<keyword id="KW-0539">Nucleus</keyword>
<keyword id="KW-1185">Reference proteome</keyword>
<keyword id="KW-0690">Ribosome biogenesis</keyword>
<keyword id="KW-0694">RNA-binding</keyword>
<keyword id="KW-0698">rRNA processing</keyword>
<feature type="chain" id="PRO_0000232337" description="ATP-dependent RNA helicase DBP9">
    <location>
        <begin position="1"/>
        <end position="574"/>
    </location>
</feature>
<feature type="domain" description="Helicase ATP-binding" evidence="2">
    <location>
        <begin position="46"/>
        <end position="224"/>
    </location>
</feature>
<feature type="domain" description="Helicase C-terminal" evidence="3">
    <location>
        <begin position="235"/>
        <end position="455"/>
    </location>
</feature>
<feature type="region of interest" description="Disordered" evidence="4">
    <location>
        <begin position="324"/>
        <end position="359"/>
    </location>
</feature>
<feature type="region of interest" description="Disordered" evidence="4">
    <location>
        <begin position="549"/>
        <end position="574"/>
    </location>
</feature>
<feature type="short sequence motif" description="Q motif">
    <location>
        <begin position="14"/>
        <end position="42"/>
    </location>
</feature>
<feature type="short sequence motif" description="DEAD box">
    <location>
        <begin position="170"/>
        <end position="173"/>
    </location>
</feature>
<feature type="compositionally biased region" description="Acidic residues" evidence="4">
    <location>
        <begin position="324"/>
        <end position="338"/>
    </location>
</feature>
<feature type="compositionally biased region" description="Basic and acidic residues" evidence="4">
    <location>
        <begin position="339"/>
        <end position="349"/>
    </location>
</feature>
<feature type="compositionally biased region" description="Basic residues" evidence="4">
    <location>
        <begin position="549"/>
        <end position="564"/>
    </location>
</feature>
<feature type="compositionally biased region" description="Basic and acidic residues" evidence="4">
    <location>
        <begin position="565"/>
        <end position="574"/>
    </location>
</feature>
<feature type="binding site" evidence="2">
    <location>
        <begin position="59"/>
        <end position="66"/>
    </location>
    <ligand>
        <name>ATP</name>
        <dbReference type="ChEBI" id="CHEBI:30616"/>
    </ligand>
</feature>
<feature type="sequence conflict" description="In Ref. 1; CAA21924." evidence="5" ref="1">
    <original>D</original>
    <variation>N</variation>
    <location>
        <position position="332"/>
    </location>
</feature>
<feature type="sequence conflict" description="In Ref. 1; CAA21924." evidence="5" ref="1">
    <original>K</original>
    <variation>N</variation>
    <location>
        <position position="455"/>
    </location>
</feature>
<proteinExistence type="inferred from homology"/>
<reference key="1">
    <citation type="submission" date="1998-11" db="EMBL/GenBank/DDBJ databases">
        <title>Candida albicans strain 1161 genome pilot sequencing project.</title>
        <authorList>
            <person name="Oliver K."/>
            <person name="Harris D."/>
            <person name="Barrell B.G."/>
            <person name="Rajandream M.A."/>
        </authorList>
    </citation>
    <scope>NUCLEOTIDE SEQUENCE [LARGE SCALE GENOMIC DNA]</scope>
    <source>
        <strain>1161</strain>
    </source>
</reference>
<reference key="2">
    <citation type="journal article" date="2004" name="Proc. Natl. Acad. Sci. U.S.A.">
        <title>The diploid genome sequence of Candida albicans.</title>
        <authorList>
            <person name="Jones T."/>
            <person name="Federspiel N.A."/>
            <person name="Chibana H."/>
            <person name="Dungan J."/>
            <person name="Kalman S."/>
            <person name="Magee B.B."/>
            <person name="Newport G."/>
            <person name="Thorstenson Y.R."/>
            <person name="Agabian N."/>
            <person name="Magee P.T."/>
            <person name="Davis R.W."/>
            <person name="Scherer S."/>
        </authorList>
    </citation>
    <scope>NUCLEOTIDE SEQUENCE [LARGE SCALE GENOMIC DNA]</scope>
    <source>
        <strain>SC5314 / ATCC MYA-2876</strain>
    </source>
</reference>
<reference key="3">
    <citation type="journal article" date="2007" name="Genome Biol.">
        <title>Assembly of the Candida albicans genome into sixteen supercontigs aligned on the eight chromosomes.</title>
        <authorList>
            <person name="van het Hoog M."/>
            <person name="Rast T.J."/>
            <person name="Martchenko M."/>
            <person name="Grindle S."/>
            <person name="Dignard D."/>
            <person name="Hogues H."/>
            <person name="Cuomo C."/>
            <person name="Berriman M."/>
            <person name="Scherer S."/>
            <person name="Magee B.B."/>
            <person name="Whiteway M."/>
            <person name="Chibana H."/>
            <person name="Nantel A."/>
            <person name="Magee P.T."/>
        </authorList>
    </citation>
    <scope>GENOME REANNOTATION</scope>
    <source>
        <strain>SC5314 / ATCC MYA-2876</strain>
    </source>
</reference>
<reference key="4">
    <citation type="journal article" date="2013" name="Genome Biol.">
        <title>Assembly of a phased diploid Candida albicans genome facilitates allele-specific measurements and provides a simple model for repeat and indel structure.</title>
        <authorList>
            <person name="Muzzey D."/>
            <person name="Schwartz K."/>
            <person name="Weissman J.S."/>
            <person name="Sherlock G."/>
        </authorList>
    </citation>
    <scope>NUCLEOTIDE SEQUENCE [LARGE SCALE GENOMIC DNA]</scope>
    <scope>GENOME REANNOTATION</scope>
    <source>
        <strain>SC5314 / ATCC MYA-2876</strain>
    </source>
</reference>
<comment type="function">
    <text evidence="1">ATP-binding RNA helicase involved in the biogenesis of 60S ribosomal subunits and is required for the normal formation of 25S and 5.8S rRNAs.</text>
</comment>
<comment type="catalytic activity">
    <reaction>
        <text>ATP + H2O = ADP + phosphate + H(+)</text>
        <dbReference type="Rhea" id="RHEA:13065"/>
        <dbReference type="ChEBI" id="CHEBI:15377"/>
        <dbReference type="ChEBI" id="CHEBI:15378"/>
        <dbReference type="ChEBI" id="CHEBI:30616"/>
        <dbReference type="ChEBI" id="CHEBI:43474"/>
        <dbReference type="ChEBI" id="CHEBI:456216"/>
        <dbReference type="EC" id="3.6.4.13"/>
    </reaction>
</comment>
<comment type="subcellular location">
    <subcellularLocation>
        <location evidence="1">Nucleus</location>
        <location evidence="1">Nucleolus</location>
    </subcellularLocation>
</comment>
<comment type="domain">
    <text>The Q motif is unique to and characteristic of the DEAD box family of RNA helicases and controls ATP binding and hydrolysis.</text>
</comment>
<comment type="similarity">
    <text evidence="5">Belongs to the DEAD box helicase family. DDX56/DBP9 subfamily.</text>
</comment>
<protein>
    <recommendedName>
        <fullName>ATP-dependent RNA helicase DBP9</fullName>
        <ecNumber>3.6.4.13</ecNumber>
    </recommendedName>
</protein>
<dbReference type="EC" id="3.6.4.13"/>
<dbReference type="EMBL" id="AL033391">
    <property type="protein sequence ID" value="CAA21924.1"/>
    <property type="molecule type" value="Genomic_DNA"/>
</dbReference>
<dbReference type="EMBL" id="CP017628">
    <property type="protein sequence ID" value="AOW30125.1"/>
    <property type="molecule type" value="Genomic_DNA"/>
</dbReference>
<dbReference type="RefSeq" id="XP_716703.2">
    <property type="nucleotide sequence ID" value="XM_711610.2"/>
</dbReference>
<dbReference type="SMR" id="Q5A4P9"/>
<dbReference type="FunCoup" id="Q5A4P9">
    <property type="interactions" value="1046"/>
</dbReference>
<dbReference type="STRING" id="237561.Q5A4P9"/>
<dbReference type="EnsemblFungi" id="C6_01890C_A-T">
    <property type="protein sequence ID" value="C6_01890C_A-T-p1"/>
    <property type="gene ID" value="C6_01890C_A"/>
</dbReference>
<dbReference type="GeneID" id="3641598"/>
<dbReference type="KEGG" id="cal:CAALFM_C601890CA"/>
<dbReference type="CGD" id="CAL0000180288">
    <property type="gene designation" value="orf19.10896"/>
</dbReference>
<dbReference type="VEuPathDB" id="FungiDB:C6_01890C_A"/>
<dbReference type="HOGENOM" id="CLU_003041_17_1_1"/>
<dbReference type="InParanoid" id="Q5A4P9"/>
<dbReference type="OMA" id="NASEQCV"/>
<dbReference type="OrthoDB" id="1191041at2759"/>
<dbReference type="PRO" id="PR:Q5A4P9"/>
<dbReference type="Proteomes" id="UP000000559">
    <property type="component" value="Chromosome 6"/>
</dbReference>
<dbReference type="GO" id="GO:0005730">
    <property type="term" value="C:nucleolus"/>
    <property type="evidence" value="ECO:0000318"/>
    <property type="project" value="GO_Central"/>
</dbReference>
<dbReference type="GO" id="GO:0005524">
    <property type="term" value="F:ATP binding"/>
    <property type="evidence" value="ECO:0007669"/>
    <property type="project" value="UniProtKB-KW"/>
</dbReference>
<dbReference type="GO" id="GO:0016887">
    <property type="term" value="F:ATP hydrolysis activity"/>
    <property type="evidence" value="ECO:0007669"/>
    <property type="project" value="RHEA"/>
</dbReference>
<dbReference type="GO" id="GO:0003678">
    <property type="term" value="F:DNA helicase activity"/>
    <property type="evidence" value="ECO:0007669"/>
    <property type="project" value="EnsemblFungi"/>
</dbReference>
<dbReference type="GO" id="GO:0033677">
    <property type="term" value="F:DNA/RNA helicase activity"/>
    <property type="evidence" value="ECO:0007669"/>
    <property type="project" value="EnsemblFungi"/>
</dbReference>
<dbReference type="GO" id="GO:0003723">
    <property type="term" value="F:RNA binding"/>
    <property type="evidence" value="ECO:0007669"/>
    <property type="project" value="UniProtKB-KW"/>
</dbReference>
<dbReference type="GO" id="GO:0003724">
    <property type="term" value="F:RNA helicase activity"/>
    <property type="evidence" value="ECO:0007669"/>
    <property type="project" value="UniProtKB-EC"/>
</dbReference>
<dbReference type="GO" id="GO:0000463">
    <property type="term" value="P:maturation of LSU-rRNA from tricistronic rRNA transcript (SSU-rRNA, 5.8S rRNA, LSU-rRNA)"/>
    <property type="evidence" value="ECO:0007669"/>
    <property type="project" value="EnsemblFungi"/>
</dbReference>
<dbReference type="CDD" id="cd17961">
    <property type="entry name" value="DEADc_DDX56"/>
    <property type="match status" value="1"/>
</dbReference>
<dbReference type="CDD" id="cd18787">
    <property type="entry name" value="SF2_C_DEAD"/>
    <property type="match status" value="1"/>
</dbReference>
<dbReference type="Gene3D" id="3.40.50.300">
    <property type="entry name" value="P-loop containing nucleotide triphosphate hydrolases"/>
    <property type="match status" value="2"/>
</dbReference>
<dbReference type="InterPro" id="IPR011545">
    <property type="entry name" value="DEAD/DEAH_box_helicase_dom"/>
</dbReference>
<dbReference type="InterPro" id="IPR050079">
    <property type="entry name" value="DEAD_box_RNA_helicase"/>
</dbReference>
<dbReference type="InterPro" id="IPR014001">
    <property type="entry name" value="Helicase_ATP-bd"/>
</dbReference>
<dbReference type="InterPro" id="IPR001650">
    <property type="entry name" value="Helicase_C-like"/>
</dbReference>
<dbReference type="InterPro" id="IPR027417">
    <property type="entry name" value="P-loop_NTPase"/>
</dbReference>
<dbReference type="InterPro" id="IPR014014">
    <property type="entry name" value="RNA_helicase_DEAD_Q_motif"/>
</dbReference>
<dbReference type="PANTHER" id="PTHR47959">
    <property type="entry name" value="ATP-DEPENDENT RNA HELICASE RHLE-RELATED"/>
    <property type="match status" value="1"/>
</dbReference>
<dbReference type="PANTHER" id="PTHR47959:SF21">
    <property type="entry name" value="DEAD-BOX HELICASE 56"/>
    <property type="match status" value="1"/>
</dbReference>
<dbReference type="Pfam" id="PF00270">
    <property type="entry name" value="DEAD"/>
    <property type="match status" value="1"/>
</dbReference>
<dbReference type="Pfam" id="PF00271">
    <property type="entry name" value="Helicase_C"/>
    <property type="match status" value="2"/>
</dbReference>
<dbReference type="SMART" id="SM00487">
    <property type="entry name" value="DEXDc"/>
    <property type="match status" value="1"/>
</dbReference>
<dbReference type="SMART" id="SM00490">
    <property type="entry name" value="HELICc"/>
    <property type="match status" value="1"/>
</dbReference>
<dbReference type="SUPFAM" id="SSF52540">
    <property type="entry name" value="P-loop containing nucleoside triphosphate hydrolases"/>
    <property type="match status" value="2"/>
</dbReference>
<dbReference type="PROSITE" id="PS51192">
    <property type="entry name" value="HELICASE_ATP_BIND_1"/>
    <property type="match status" value="1"/>
</dbReference>
<dbReference type="PROSITE" id="PS51194">
    <property type="entry name" value="HELICASE_CTER"/>
    <property type="match status" value="1"/>
</dbReference>
<dbReference type="PROSITE" id="PS51195">
    <property type="entry name" value="Q_MOTIF"/>
    <property type="match status" value="1"/>
</dbReference>
<name>DBP9_CANAL</name>
<sequence>MSTSASSSYLDDETTWDSFNLDPRLLQAIDQLGFSNPTLIQSSAIPLALEEKRDIIAKASTGSGKTAAYCIPIVNNLLTDDSSQGIKSIILVPTRELSNQVFQFVEKLLTFSTNKINVLNLSSSYSDQVLNSLLVNKPEIIISTPAKLIQILEKNEKNIDLSTVKNLTIDEVDLVLSFGYLDDLKKLESYLPVKKNLQTFLMSATVNDDLDDLKQRYCTKPAILKLNEDSANQNNLVQYYAKTTEFDKFLLAYVIFKLNLIKGKTIAFVNNIDRGYRLKLFLEQFGIRCCILNSELPINSRLHIVEEFNKNVYHLLIATDETNELNEEQDDDEDGDEDTKDKGNAETKPKKSKKSKFKQDKEYGVSRGVDFRNVACVLNFDLPTSSKAYIHRIGRTARAGKAGMALSFVLPLSEFGKHKTASLASAKKDEKVLGRIVKQQSKNGFEIKPYQFDMKQVEGFRYRADDAFRAVTQTAVREARVKELKNELINSEKLKRFFEENPQDLASLRHDKELHPARIQSQLKNVPQYLLPESARQDVKNIGFVPFHKNKIHKHRKGKGKGRKKVDPLKSFRK</sequence>
<organism>
    <name type="scientific">Candida albicans (strain SC5314 / ATCC MYA-2876)</name>
    <name type="common">Yeast</name>
    <dbReference type="NCBI Taxonomy" id="237561"/>
    <lineage>
        <taxon>Eukaryota</taxon>
        <taxon>Fungi</taxon>
        <taxon>Dikarya</taxon>
        <taxon>Ascomycota</taxon>
        <taxon>Saccharomycotina</taxon>
        <taxon>Pichiomycetes</taxon>
        <taxon>Debaryomycetaceae</taxon>
        <taxon>Candida/Lodderomyces clade</taxon>
        <taxon>Candida</taxon>
    </lineage>
</organism>
<accession>Q5A4P9</accession>
<accession>A0A1D8PPR3</accession>
<accession>O93990</accession>